<proteinExistence type="inferred from homology"/>
<reference key="1">
    <citation type="journal article" date="2009" name="Science">
        <title>The dynamics and time scale of ongoing genomic erosion in symbiotic bacteria.</title>
        <authorList>
            <person name="Moran N.A."/>
            <person name="McLaughlin H.J."/>
            <person name="Sorek R."/>
        </authorList>
    </citation>
    <scope>NUCLEOTIDE SEQUENCE [LARGE SCALE GENOMIC DNA]</scope>
    <source>
        <strain>5A</strain>
    </source>
</reference>
<protein>
    <recommendedName>
        <fullName evidence="1">3-methyl-2-oxobutanoate hydroxymethyltransferase</fullName>
        <ecNumber evidence="1">2.1.2.11</ecNumber>
    </recommendedName>
    <alternativeName>
        <fullName evidence="1">Ketopantoate hydroxymethyltransferase</fullName>
        <shortName evidence="1">KPHMT</shortName>
    </alternativeName>
</protein>
<gene>
    <name evidence="1" type="primary">panB</name>
    <name type="ordered locus">BUAP5A_194</name>
</gene>
<feature type="chain" id="PRO_1000123372" description="3-methyl-2-oxobutanoate hydroxymethyltransferase">
    <location>
        <begin position="1"/>
        <end position="263"/>
    </location>
</feature>
<feature type="active site" description="Proton acceptor" evidence="1">
    <location>
        <position position="181"/>
    </location>
</feature>
<feature type="binding site" evidence="1">
    <location>
        <begin position="45"/>
        <end position="46"/>
    </location>
    <ligand>
        <name>3-methyl-2-oxobutanoate</name>
        <dbReference type="ChEBI" id="CHEBI:11851"/>
    </ligand>
</feature>
<feature type="binding site" evidence="1">
    <location>
        <position position="45"/>
    </location>
    <ligand>
        <name>Mg(2+)</name>
        <dbReference type="ChEBI" id="CHEBI:18420"/>
    </ligand>
</feature>
<feature type="binding site" evidence="1">
    <location>
        <position position="84"/>
    </location>
    <ligand>
        <name>3-methyl-2-oxobutanoate</name>
        <dbReference type="ChEBI" id="CHEBI:11851"/>
    </ligand>
</feature>
<feature type="binding site" evidence="1">
    <location>
        <position position="84"/>
    </location>
    <ligand>
        <name>Mg(2+)</name>
        <dbReference type="ChEBI" id="CHEBI:18420"/>
    </ligand>
</feature>
<feature type="binding site" evidence="1">
    <location>
        <position position="112"/>
    </location>
    <ligand>
        <name>3-methyl-2-oxobutanoate</name>
        <dbReference type="ChEBI" id="CHEBI:11851"/>
    </ligand>
</feature>
<feature type="binding site" evidence="1">
    <location>
        <position position="114"/>
    </location>
    <ligand>
        <name>Mg(2+)</name>
        <dbReference type="ChEBI" id="CHEBI:18420"/>
    </ligand>
</feature>
<sequence length="263" mass="29346">MESITISQLKNWKRNKKKIAAITAYDFSFSRLFSNCGIPVILIGDSLGMTIQGHTSTLPVKIEDIAYHTKAVRKGAPNTFLISDLPFMSYYDTKQALKNTAKIIRSGANMIKMEGGKWLIEIIRELSNRLILICGHIGLIPQSFHYLGGYKVQGRKENDANKLIDEALLLEEAGINMLILECIPEKLAKKITESLSIPVIGIGSGKNTDGQILVMHDLLGITEGKTPSFTKNFLSESDSIQKAIQKYIYEVEHSIYPSKKHSF</sequence>
<comment type="function">
    <text evidence="1">Catalyzes the reversible reaction in which hydroxymethyl group from 5,10-methylenetetrahydrofolate is transferred onto alpha-ketoisovalerate to form ketopantoate.</text>
</comment>
<comment type="catalytic activity">
    <reaction evidence="1">
        <text>3-methyl-2-oxobutanoate + (6R)-5,10-methylene-5,6,7,8-tetrahydrofolate + H2O = 2-dehydropantoate + (6S)-5,6,7,8-tetrahydrofolate</text>
        <dbReference type="Rhea" id="RHEA:11824"/>
        <dbReference type="ChEBI" id="CHEBI:11561"/>
        <dbReference type="ChEBI" id="CHEBI:11851"/>
        <dbReference type="ChEBI" id="CHEBI:15377"/>
        <dbReference type="ChEBI" id="CHEBI:15636"/>
        <dbReference type="ChEBI" id="CHEBI:57453"/>
        <dbReference type="EC" id="2.1.2.11"/>
    </reaction>
</comment>
<comment type="cofactor">
    <cofactor evidence="1">
        <name>Mg(2+)</name>
        <dbReference type="ChEBI" id="CHEBI:18420"/>
    </cofactor>
    <text evidence="1">Binds 1 Mg(2+) ion per subunit.</text>
</comment>
<comment type="pathway">
    <text evidence="1">Cofactor biosynthesis; (R)-pantothenate biosynthesis; (R)-pantoate from 3-methyl-2-oxobutanoate: step 1/2.</text>
</comment>
<comment type="subunit">
    <text evidence="1">Homodecamer; pentamer of dimers.</text>
</comment>
<comment type="subcellular location">
    <subcellularLocation>
        <location evidence="1">Cytoplasm</location>
    </subcellularLocation>
</comment>
<comment type="similarity">
    <text evidence="1">Belongs to the PanB family.</text>
</comment>
<organism>
    <name type="scientific">Buchnera aphidicola subsp. Acyrthosiphon pisum (strain 5A)</name>
    <dbReference type="NCBI Taxonomy" id="563178"/>
    <lineage>
        <taxon>Bacteria</taxon>
        <taxon>Pseudomonadati</taxon>
        <taxon>Pseudomonadota</taxon>
        <taxon>Gammaproteobacteria</taxon>
        <taxon>Enterobacterales</taxon>
        <taxon>Erwiniaceae</taxon>
        <taxon>Buchnera</taxon>
    </lineage>
</organism>
<evidence type="ECO:0000255" key="1">
    <source>
        <dbReference type="HAMAP-Rule" id="MF_00156"/>
    </source>
</evidence>
<name>PANB_BUCA5</name>
<keyword id="KW-0963">Cytoplasm</keyword>
<keyword id="KW-0460">Magnesium</keyword>
<keyword id="KW-0479">Metal-binding</keyword>
<keyword id="KW-0566">Pantothenate biosynthesis</keyword>
<keyword id="KW-0808">Transferase</keyword>
<accession>B8D8Z6</accession>
<dbReference type="EC" id="2.1.2.11" evidence="1"/>
<dbReference type="EMBL" id="CP001161">
    <property type="protein sequence ID" value="ACL30567.1"/>
    <property type="molecule type" value="Genomic_DNA"/>
</dbReference>
<dbReference type="RefSeq" id="WP_009874154.1">
    <property type="nucleotide sequence ID" value="NC_011833.1"/>
</dbReference>
<dbReference type="SMR" id="B8D8Z6"/>
<dbReference type="KEGG" id="bap:BUAP5A_194"/>
<dbReference type="HOGENOM" id="CLU_036645_1_0_6"/>
<dbReference type="OrthoDB" id="9781789at2"/>
<dbReference type="UniPathway" id="UPA00028">
    <property type="reaction ID" value="UER00003"/>
</dbReference>
<dbReference type="Proteomes" id="UP000006904">
    <property type="component" value="Chromosome"/>
</dbReference>
<dbReference type="GO" id="GO:0005737">
    <property type="term" value="C:cytoplasm"/>
    <property type="evidence" value="ECO:0007669"/>
    <property type="project" value="UniProtKB-SubCell"/>
</dbReference>
<dbReference type="GO" id="GO:0003864">
    <property type="term" value="F:3-methyl-2-oxobutanoate hydroxymethyltransferase activity"/>
    <property type="evidence" value="ECO:0007669"/>
    <property type="project" value="UniProtKB-UniRule"/>
</dbReference>
<dbReference type="GO" id="GO:0000287">
    <property type="term" value="F:magnesium ion binding"/>
    <property type="evidence" value="ECO:0007669"/>
    <property type="project" value="TreeGrafter"/>
</dbReference>
<dbReference type="GO" id="GO:0015940">
    <property type="term" value="P:pantothenate biosynthetic process"/>
    <property type="evidence" value="ECO:0007669"/>
    <property type="project" value="UniProtKB-UniRule"/>
</dbReference>
<dbReference type="CDD" id="cd06557">
    <property type="entry name" value="KPHMT-like"/>
    <property type="match status" value="1"/>
</dbReference>
<dbReference type="FunFam" id="3.20.20.60:FF:000003">
    <property type="entry name" value="3-methyl-2-oxobutanoate hydroxymethyltransferase"/>
    <property type="match status" value="1"/>
</dbReference>
<dbReference type="Gene3D" id="3.20.20.60">
    <property type="entry name" value="Phosphoenolpyruvate-binding domains"/>
    <property type="match status" value="1"/>
</dbReference>
<dbReference type="HAMAP" id="MF_00156">
    <property type="entry name" value="PanB"/>
    <property type="match status" value="1"/>
</dbReference>
<dbReference type="InterPro" id="IPR003700">
    <property type="entry name" value="Pantoate_hydroxy_MeTrfase"/>
</dbReference>
<dbReference type="InterPro" id="IPR015813">
    <property type="entry name" value="Pyrv/PenolPyrv_kinase-like_dom"/>
</dbReference>
<dbReference type="InterPro" id="IPR040442">
    <property type="entry name" value="Pyrv_kinase-like_dom_sf"/>
</dbReference>
<dbReference type="NCBIfam" id="TIGR00222">
    <property type="entry name" value="panB"/>
    <property type="match status" value="1"/>
</dbReference>
<dbReference type="NCBIfam" id="NF001452">
    <property type="entry name" value="PRK00311.1"/>
    <property type="match status" value="1"/>
</dbReference>
<dbReference type="PANTHER" id="PTHR20881">
    <property type="entry name" value="3-METHYL-2-OXOBUTANOATE HYDROXYMETHYLTRANSFERASE"/>
    <property type="match status" value="1"/>
</dbReference>
<dbReference type="PANTHER" id="PTHR20881:SF0">
    <property type="entry name" value="3-METHYL-2-OXOBUTANOATE HYDROXYMETHYLTRANSFERASE"/>
    <property type="match status" value="1"/>
</dbReference>
<dbReference type="Pfam" id="PF02548">
    <property type="entry name" value="Pantoate_transf"/>
    <property type="match status" value="1"/>
</dbReference>
<dbReference type="PIRSF" id="PIRSF000388">
    <property type="entry name" value="Pantoate_hydroxy_MeTrfase"/>
    <property type="match status" value="1"/>
</dbReference>
<dbReference type="SUPFAM" id="SSF51621">
    <property type="entry name" value="Phosphoenolpyruvate/pyruvate domain"/>
    <property type="match status" value="1"/>
</dbReference>